<name>RPIA_VIBA3</name>
<proteinExistence type="inferred from homology"/>
<organism>
    <name type="scientific">Vibrio atlanticus (strain LGP32)</name>
    <name type="common">Vibrio splendidus (strain Mel32)</name>
    <dbReference type="NCBI Taxonomy" id="575788"/>
    <lineage>
        <taxon>Bacteria</taxon>
        <taxon>Pseudomonadati</taxon>
        <taxon>Pseudomonadota</taxon>
        <taxon>Gammaproteobacteria</taxon>
        <taxon>Vibrionales</taxon>
        <taxon>Vibrionaceae</taxon>
        <taxon>Vibrio</taxon>
    </lineage>
</organism>
<reference key="1">
    <citation type="submission" date="2009-02" db="EMBL/GenBank/DDBJ databases">
        <title>Vibrio splendidus str. LGP32 complete genome.</title>
        <authorList>
            <person name="Mazel D."/>
            <person name="Le Roux F."/>
        </authorList>
    </citation>
    <scope>NUCLEOTIDE SEQUENCE [LARGE SCALE GENOMIC DNA]</scope>
    <source>
        <strain>LGP32</strain>
    </source>
</reference>
<evidence type="ECO:0000255" key="1">
    <source>
        <dbReference type="HAMAP-Rule" id="MF_00170"/>
    </source>
</evidence>
<gene>
    <name evidence="1" type="primary">rpiA</name>
    <name type="ordered locus">VS_2639</name>
</gene>
<dbReference type="EC" id="5.3.1.6" evidence="1"/>
<dbReference type="EMBL" id="FM954972">
    <property type="protein sequence ID" value="CAV19864.1"/>
    <property type="molecule type" value="Genomic_DNA"/>
</dbReference>
<dbReference type="SMR" id="B7VK98"/>
<dbReference type="STRING" id="575788.VS_2639"/>
<dbReference type="KEGG" id="vsp:VS_2639"/>
<dbReference type="PATRIC" id="fig|575788.5.peg.3884"/>
<dbReference type="eggNOG" id="COG0120">
    <property type="taxonomic scope" value="Bacteria"/>
</dbReference>
<dbReference type="HOGENOM" id="CLU_056590_1_1_6"/>
<dbReference type="UniPathway" id="UPA00115">
    <property type="reaction ID" value="UER00412"/>
</dbReference>
<dbReference type="Proteomes" id="UP000009100">
    <property type="component" value="Chromosome 1"/>
</dbReference>
<dbReference type="GO" id="GO:0005829">
    <property type="term" value="C:cytosol"/>
    <property type="evidence" value="ECO:0007669"/>
    <property type="project" value="TreeGrafter"/>
</dbReference>
<dbReference type="GO" id="GO:0004751">
    <property type="term" value="F:ribose-5-phosphate isomerase activity"/>
    <property type="evidence" value="ECO:0007669"/>
    <property type="project" value="UniProtKB-UniRule"/>
</dbReference>
<dbReference type="GO" id="GO:0006014">
    <property type="term" value="P:D-ribose metabolic process"/>
    <property type="evidence" value="ECO:0007669"/>
    <property type="project" value="TreeGrafter"/>
</dbReference>
<dbReference type="GO" id="GO:0009052">
    <property type="term" value="P:pentose-phosphate shunt, non-oxidative branch"/>
    <property type="evidence" value="ECO:0007669"/>
    <property type="project" value="UniProtKB-UniRule"/>
</dbReference>
<dbReference type="CDD" id="cd01398">
    <property type="entry name" value="RPI_A"/>
    <property type="match status" value="1"/>
</dbReference>
<dbReference type="FunFam" id="3.30.70.260:FF:000004">
    <property type="entry name" value="Ribose-5-phosphate isomerase A"/>
    <property type="match status" value="1"/>
</dbReference>
<dbReference type="FunFam" id="3.40.50.1360:FF:000001">
    <property type="entry name" value="Ribose-5-phosphate isomerase A"/>
    <property type="match status" value="1"/>
</dbReference>
<dbReference type="Gene3D" id="3.30.70.260">
    <property type="match status" value="1"/>
</dbReference>
<dbReference type="Gene3D" id="3.40.50.1360">
    <property type="match status" value="1"/>
</dbReference>
<dbReference type="HAMAP" id="MF_00170">
    <property type="entry name" value="Rib_5P_isom_A"/>
    <property type="match status" value="1"/>
</dbReference>
<dbReference type="InterPro" id="IPR037171">
    <property type="entry name" value="NagB/RpiA_transferase-like"/>
</dbReference>
<dbReference type="InterPro" id="IPR020672">
    <property type="entry name" value="Ribose5P_isomerase_typA_subgr"/>
</dbReference>
<dbReference type="InterPro" id="IPR004788">
    <property type="entry name" value="Ribose5P_isomerase_type_A"/>
</dbReference>
<dbReference type="NCBIfam" id="NF001924">
    <property type="entry name" value="PRK00702.1"/>
    <property type="match status" value="1"/>
</dbReference>
<dbReference type="NCBIfam" id="TIGR00021">
    <property type="entry name" value="rpiA"/>
    <property type="match status" value="1"/>
</dbReference>
<dbReference type="PANTHER" id="PTHR11934">
    <property type="entry name" value="RIBOSE-5-PHOSPHATE ISOMERASE"/>
    <property type="match status" value="1"/>
</dbReference>
<dbReference type="PANTHER" id="PTHR11934:SF0">
    <property type="entry name" value="RIBOSE-5-PHOSPHATE ISOMERASE"/>
    <property type="match status" value="1"/>
</dbReference>
<dbReference type="Pfam" id="PF06026">
    <property type="entry name" value="Rib_5-P_isom_A"/>
    <property type="match status" value="1"/>
</dbReference>
<dbReference type="SUPFAM" id="SSF75445">
    <property type="entry name" value="D-ribose-5-phosphate isomerase (RpiA), lid domain"/>
    <property type="match status" value="1"/>
</dbReference>
<dbReference type="SUPFAM" id="SSF100950">
    <property type="entry name" value="NagB/RpiA/CoA transferase-like"/>
    <property type="match status" value="1"/>
</dbReference>
<comment type="function">
    <text evidence="1">Catalyzes the reversible conversion of ribose-5-phosphate to ribulose 5-phosphate.</text>
</comment>
<comment type="catalytic activity">
    <reaction evidence="1">
        <text>aldehydo-D-ribose 5-phosphate = D-ribulose 5-phosphate</text>
        <dbReference type="Rhea" id="RHEA:14657"/>
        <dbReference type="ChEBI" id="CHEBI:58121"/>
        <dbReference type="ChEBI" id="CHEBI:58273"/>
        <dbReference type="EC" id="5.3.1.6"/>
    </reaction>
</comment>
<comment type="pathway">
    <text evidence="1">Carbohydrate degradation; pentose phosphate pathway; D-ribose 5-phosphate from D-ribulose 5-phosphate (non-oxidative stage): step 1/1.</text>
</comment>
<comment type="subunit">
    <text evidence="1">Homodimer.</text>
</comment>
<comment type="similarity">
    <text evidence="1">Belongs to the ribose 5-phosphate isomerase family.</text>
</comment>
<keyword id="KW-0413">Isomerase</keyword>
<sequence>MTQDEMKKAAGWAALQYVEEGSIVGVGTGSTVNHFIDALGTMKDKIKGAVSSSIASTEKLEALEIKVFECNDVFKLDIYVDGADEINGSRDMIKGGGAALTREKIVAAISDKFICIVDGTKAVDVLGKFPLPVEVIPMARSYVARELVKLGGDPVYREGCTTDNGNVILDVYGMAIENPKQLEDIINGIAGVVTVGLFAHRGADVVITGTPEGAKIEE</sequence>
<feature type="chain" id="PRO_1000194733" description="Ribose-5-phosphate isomerase A">
    <location>
        <begin position="1"/>
        <end position="218"/>
    </location>
</feature>
<feature type="active site" description="Proton acceptor" evidence="1">
    <location>
        <position position="103"/>
    </location>
</feature>
<feature type="binding site" evidence="1">
    <location>
        <begin position="28"/>
        <end position="31"/>
    </location>
    <ligand>
        <name>substrate</name>
    </ligand>
</feature>
<feature type="binding site" evidence="1">
    <location>
        <begin position="81"/>
        <end position="84"/>
    </location>
    <ligand>
        <name>substrate</name>
    </ligand>
</feature>
<feature type="binding site" evidence="1">
    <location>
        <begin position="94"/>
        <end position="97"/>
    </location>
    <ligand>
        <name>substrate</name>
    </ligand>
</feature>
<feature type="binding site" evidence="1">
    <location>
        <position position="121"/>
    </location>
    <ligand>
        <name>substrate</name>
    </ligand>
</feature>
<protein>
    <recommendedName>
        <fullName evidence="1">Ribose-5-phosphate isomerase A</fullName>
        <ecNumber evidence="1">5.3.1.6</ecNumber>
    </recommendedName>
    <alternativeName>
        <fullName evidence="1">Phosphoriboisomerase A</fullName>
        <shortName evidence="1">PRI</shortName>
    </alternativeName>
</protein>
<accession>B7VK98</accession>